<keyword id="KW-0249">Electron transport</keyword>
<keyword id="KW-0349">Heme</keyword>
<keyword id="KW-0408">Iron</keyword>
<keyword id="KW-0472">Membrane</keyword>
<keyword id="KW-0479">Metal-binding</keyword>
<keyword id="KW-0496">Mitochondrion</keyword>
<keyword id="KW-0999">Mitochondrion inner membrane</keyword>
<keyword id="KW-0679">Respiratory chain</keyword>
<keyword id="KW-0812">Transmembrane</keyword>
<keyword id="KW-1133">Transmembrane helix</keyword>
<keyword id="KW-0813">Transport</keyword>
<keyword id="KW-0830">Ubiquinone</keyword>
<name>CYB_CHRGO</name>
<sequence>MTNIRKTHPLIKIINHSFIDLPAPSNISSWWNFGSLLGLCLMIQIITGLFLAMHYTSDTTTAFSSVAHICRDVNYGWLIRYMHANGASMFFICLFLHVGRGMYYGSYTFMETWNIGVILLFTVMATAFMGYVLPWGQMSFWGATVITNLLSAIPYIGTTLVEWIWGGFSVDKATLTRFFAFHFILPFIITALVIVHLLFLHETGSNNPTGLNSDADKIPFHPYYTIKDLLGALILILSLMTMVLFFPDLLGDPDNYTPANPLNTPPHIKPEWYFLFAYAILRSIPNKLGGVLALILSILILAFLPFLHTSKQRSMMFRPITQVLYWLLVANLLVLTWIGGQPVEHPFIIIGQLASISYFSIILILMPISGIIEDKLLKWSL</sequence>
<comment type="function">
    <text evidence="2">Component of the ubiquinol-cytochrome c reductase complex (complex III or cytochrome b-c1 complex) that is part of the mitochondrial respiratory chain. The b-c1 complex mediates electron transfer from ubiquinol to cytochrome c. Contributes to the generation of a proton gradient across the mitochondrial membrane that is then used for ATP synthesis.</text>
</comment>
<comment type="cofactor">
    <cofactor evidence="2">
        <name>heme b</name>
        <dbReference type="ChEBI" id="CHEBI:60344"/>
    </cofactor>
    <text evidence="2">Binds 2 heme b groups non-covalently.</text>
</comment>
<comment type="subunit">
    <text evidence="2">The cytochrome bc1 complex contains 11 subunits: 3 respiratory subunits (MT-CYB, CYC1 and UQCRFS1), 2 core proteins (UQCRC1 and UQCRC2) and 6 low-molecular weight proteins (UQCRH/QCR6, UQCRB/QCR7, UQCRQ/QCR8, UQCR10/QCR9, UQCR11/QCR10 and a cleavage product of UQCRFS1). This cytochrome bc1 complex then forms a dimer.</text>
</comment>
<comment type="subcellular location">
    <subcellularLocation>
        <location evidence="2">Mitochondrion inner membrane</location>
        <topology evidence="2">Multi-pass membrane protein</topology>
    </subcellularLocation>
</comment>
<comment type="miscellaneous">
    <text evidence="1">Heme 1 (or BL or b562) is low-potential and absorbs at about 562 nm, and heme 2 (or BH or b566) is high-potential and absorbs at about 566 nm.</text>
</comment>
<comment type="similarity">
    <text evidence="3 4">Belongs to the cytochrome b family.</text>
</comment>
<comment type="caution">
    <text evidence="2">The full-length protein contains only eight transmembrane helices, not nine as predicted by bioinformatics tools.</text>
</comment>
<protein>
    <recommendedName>
        <fullName>Cytochrome b</fullName>
    </recommendedName>
    <alternativeName>
        <fullName>Complex III subunit 3</fullName>
    </alternativeName>
    <alternativeName>
        <fullName>Complex III subunit III</fullName>
    </alternativeName>
    <alternativeName>
        <fullName>Cytochrome b-c1 complex subunit 3</fullName>
    </alternativeName>
    <alternativeName>
        <fullName>Ubiquinol-cytochrome-c reductase complex cytochrome b subunit</fullName>
    </alternativeName>
</protein>
<dbReference type="EMBL" id="AY324461">
    <property type="protein sequence ID" value="AAP88706.2"/>
    <property type="molecule type" value="Genomic_DNA"/>
</dbReference>
<dbReference type="EMBL" id="AY687860">
    <property type="protein sequence ID" value="AAU21043.1"/>
    <property type="molecule type" value="Genomic_DNA"/>
</dbReference>
<dbReference type="EMBL" id="AY687861">
    <property type="protein sequence ID" value="AAU21044.1"/>
    <property type="molecule type" value="Genomic_DNA"/>
</dbReference>
<dbReference type="SMR" id="Q7YC75"/>
<dbReference type="GO" id="GO:0005743">
    <property type="term" value="C:mitochondrial inner membrane"/>
    <property type="evidence" value="ECO:0007669"/>
    <property type="project" value="UniProtKB-SubCell"/>
</dbReference>
<dbReference type="GO" id="GO:0045275">
    <property type="term" value="C:respiratory chain complex III"/>
    <property type="evidence" value="ECO:0007669"/>
    <property type="project" value="InterPro"/>
</dbReference>
<dbReference type="GO" id="GO:0046872">
    <property type="term" value="F:metal ion binding"/>
    <property type="evidence" value="ECO:0007669"/>
    <property type="project" value="UniProtKB-KW"/>
</dbReference>
<dbReference type="GO" id="GO:0008121">
    <property type="term" value="F:ubiquinol-cytochrome-c reductase activity"/>
    <property type="evidence" value="ECO:0007669"/>
    <property type="project" value="InterPro"/>
</dbReference>
<dbReference type="GO" id="GO:0006122">
    <property type="term" value="P:mitochondrial electron transport, ubiquinol to cytochrome c"/>
    <property type="evidence" value="ECO:0007669"/>
    <property type="project" value="TreeGrafter"/>
</dbReference>
<dbReference type="CDD" id="cd00290">
    <property type="entry name" value="cytochrome_b_C"/>
    <property type="match status" value="1"/>
</dbReference>
<dbReference type="CDD" id="cd00284">
    <property type="entry name" value="Cytochrome_b_N"/>
    <property type="match status" value="1"/>
</dbReference>
<dbReference type="FunFam" id="1.20.810.10:FF:000002">
    <property type="entry name" value="Cytochrome b"/>
    <property type="match status" value="1"/>
</dbReference>
<dbReference type="Gene3D" id="1.20.810.10">
    <property type="entry name" value="Cytochrome Bc1 Complex, Chain C"/>
    <property type="match status" value="1"/>
</dbReference>
<dbReference type="InterPro" id="IPR005798">
    <property type="entry name" value="Cyt_b/b6_C"/>
</dbReference>
<dbReference type="InterPro" id="IPR036150">
    <property type="entry name" value="Cyt_b/b6_C_sf"/>
</dbReference>
<dbReference type="InterPro" id="IPR005797">
    <property type="entry name" value="Cyt_b/b6_N"/>
</dbReference>
<dbReference type="InterPro" id="IPR027387">
    <property type="entry name" value="Cytb/b6-like_sf"/>
</dbReference>
<dbReference type="InterPro" id="IPR030689">
    <property type="entry name" value="Cytochrome_b"/>
</dbReference>
<dbReference type="InterPro" id="IPR048260">
    <property type="entry name" value="Cytochrome_b_C_euk/bac"/>
</dbReference>
<dbReference type="InterPro" id="IPR048259">
    <property type="entry name" value="Cytochrome_b_N_euk/bac"/>
</dbReference>
<dbReference type="InterPro" id="IPR016174">
    <property type="entry name" value="Di-haem_cyt_TM"/>
</dbReference>
<dbReference type="PANTHER" id="PTHR19271">
    <property type="entry name" value="CYTOCHROME B"/>
    <property type="match status" value="1"/>
</dbReference>
<dbReference type="PANTHER" id="PTHR19271:SF16">
    <property type="entry name" value="CYTOCHROME B"/>
    <property type="match status" value="1"/>
</dbReference>
<dbReference type="Pfam" id="PF00032">
    <property type="entry name" value="Cytochrom_B_C"/>
    <property type="match status" value="1"/>
</dbReference>
<dbReference type="Pfam" id="PF00033">
    <property type="entry name" value="Cytochrome_B"/>
    <property type="match status" value="1"/>
</dbReference>
<dbReference type="PIRSF" id="PIRSF038885">
    <property type="entry name" value="COB"/>
    <property type="match status" value="1"/>
</dbReference>
<dbReference type="SUPFAM" id="SSF81648">
    <property type="entry name" value="a domain/subunit of cytochrome bc1 complex (Ubiquinol-cytochrome c reductase)"/>
    <property type="match status" value="1"/>
</dbReference>
<dbReference type="SUPFAM" id="SSF81342">
    <property type="entry name" value="Transmembrane di-heme cytochromes"/>
    <property type="match status" value="1"/>
</dbReference>
<dbReference type="PROSITE" id="PS51003">
    <property type="entry name" value="CYTB_CTER"/>
    <property type="match status" value="1"/>
</dbReference>
<dbReference type="PROSITE" id="PS51002">
    <property type="entry name" value="CYTB_NTER"/>
    <property type="match status" value="1"/>
</dbReference>
<accession>Q7YC75</accession>
<gene>
    <name type="primary">MT-CYB</name>
    <name type="synonym">COB</name>
    <name type="synonym">CYTB</name>
    <name type="synonym">MTCYB</name>
</gene>
<organism>
    <name type="scientific">Chrotomys gonzalesi</name>
    <name type="common">Isarog striped shrew rat</name>
    <dbReference type="NCBI Taxonomy" id="237998"/>
    <lineage>
        <taxon>Eukaryota</taxon>
        <taxon>Metazoa</taxon>
        <taxon>Chordata</taxon>
        <taxon>Craniata</taxon>
        <taxon>Vertebrata</taxon>
        <taxon>Euteleostomi</taxon>
        <taxon>Mammalia</taxon>
        <taxon>Eutheria</taxon>
        <taxon>Euarchontoglires</taxon>
        <taxon>Glires</taxon>
        <taxon>Rodentia</taxon>
        <taxon>Myomorpha</taxon>
        <taxon>Muroidea</taxon>
        <taxon>Muridae</taxon>
        <taxon>Murinae</taxon>
        <taxon>Chrotomys</taxon>
    </lineage>
</organism>
<feature type="chain" id="PRO_0000255006" description="Cytochrome b">
    <location>
        <begin position="1"/>
        <end position="381"/>
    </location>
</feature>
<feature type="transmembrane region" description="Helical" evidence="2">
    <location>
        <begin position="33"/>
        <end position="53"/>
    </location>
</feature>
<feature type="transmembrane region" description="Helical" evidence="2">
    <location>
        <begin position="77"/>
        <end position="98"/>
    </location>
</feature>
<feature type="transmembrane region" description="Helical" evidence="2">
    <location>
        <begin position="113"/>
        <end position="133"/>
    </location>
</feature>
<feature type="transmembrane region" description="Helical" evidence="2">
    <location>
        <begin position="178"/>
        <end position="198"/>
    </location>
</feature>
<feature type="transmembrane region" description="Helical" evidence="2">
    <location>
        <begin position="226"/>
        <end position="246"/>
    </location>
</feature>
<feature type="transmembrane region" description="Helical" evidence="2">
    <location>
        <begin position="288"/>
        <end position="308"/>
    </location>
</feature>
<feature type="transmembrane region" description="Helical" evidence="2">
    <location>
        <begin position="320"/>
        <end position="340"/>
    </location>
</feature>
<feature type="transmembrane region" description="Helical" evidence="2">
    <location>
        <begin position="347"/>
        <end position="367"/>
    </location>
</feature>
<feature type="binding site" description="axial binding residue" evidence="2">
    <location>
        <position position="83"/>
    </location>
    <ligand>
        <name>heme b</name>
        <dbReference type="ChEBI" id="CHEBI:60344"/>
        <label>b562</label>
    </ligand>
    <ligandPart>
        <name>Fe</name>
        <dbReference type="ChEBI" id="CHEBI:18248"/>
    </ligandPart>
</feature>
<feature type="binding site" description="axial binding residue" evidence="2">
    <location>
        <position position="97"/>
    </location>
    <ligand>
        <name>heme b</name>
        <dbReference type="ChEBI" id="CHEBI:60344"/>
        <label>b566</label>
    </ligand>
    <ligandPart>
        <name>Fe</name>
        <dbReference type="ChEBI" id="CHEBI:18248"/>
    </ligandPart>
</feature>
<feature type="binding site" description="axial binding residue" evidence="2">
    <location>
        <position position="182"/>
    </location>
    <ligand>
        <name>heme b</name>
        <dbReference type="ChEBI" id="CHEBI:60344"/>
        <label>b562</label>
    </ligand>
    <ligandPart>
        <name>Fe</name>
        <dbReference type="ChEBI" id="CHEBI:18248"/>
    </ligandPart>
</feature>
<feature type="binding site" description="axial binding residue" evidence="2">
    <location>
        <position position="196"/>
    </location>
    <ligand>
        <name>heme b</name>
        <dbReference type="ChEBI" id="CHEBI:60344"/>
        <label>b566</label>
    </ligand>
    <ligandPart>
        <name>Fe</name>
        <dbReference type="ChEBI" id="CHEBI:18248"/>
    </ligandPart>
</feature>
<feature type="binding site" evidence="2">
    <location>
        <position position="201"/>
    </location>
    <ligand>
        <name>a ubiquinone</name>
        <dbReference type="ChEBI" id="CHEBI:16389"/>
    </ligand>
</feature>
<geneLocation type="mitochondrion"/>
<reference key="1">
    <citation type="journal article" date="2003" name="Biol. J. Linn. Soc. Lond.">
        <title>Molecular phylogeny of the endemic Philippine rodent Apomys (Muridae) and the dynamics of diversification in an oceanic archipelago.</title>
        <authorList>
            <person name="Steppan S.J."/>
            <person name="Zawadzki C."/>
            <person name="Heaney L.R."/>
        </authorList>
    </citation>
    <scope>NUCLEOTIDE SEQUENCE [GENOMIC DNA]</scope>
</reference>
<reference key="2">
    <citation type="journal article" date="2005" name="J. Mammal.">
        <title>Review of the philippine genera Chrotomys and Celaenomys (Murinae) and description of a new species.</title>
        <authorList>
            <person name="Rickart E.A."/>
            <person name="Heaney L.R."/>
            <person name="Goodman S.M."/>
            <person name="Jansa S."/>
        </authorList>
    </citation>
    <scope>NUCLEOTIDE SEQUENCE [GENOMIC DNA]</scope>
</reference>
<proteinExistence type="inferred from homology"/>
<evidence type="ECO:0000250" key="1"/>
<evidence type="ECO:0000250" key="2">
    <source>
        <dbReference type="UniProtKB" id="P00157"/>
    </source>
</evidence>
<evidence type="ECO:0000255" key="3">
    <source>
        <dbReference type="PROSITE-ProRule" id="PRU00967"/>
    </source>
</evidence>
<evidence type="ECO:0000255" key="4">
    <source>
        <dbReference type="PROSITE-ProRule" id="PRU00968"/>
    </source>
</evidence>